<protein>
    <recommendedName>
        <fullName evidence="1">NADH-quinone oxidoreductase subunit C</fullName>
        <ecNumber evidence="1">7.1.1.-</ecNumber>
    </recommendedName>
    <alternativeName>
        <fullName evidence="1">NADH dehydrogenase I subunit C</fullName>
    </alternativeName>
    <alternativeName>
        <fullName evidence="1">NDH-1 subunit C</fullName>
    </alternativeName>
</protein>
<proteinExistence type="inferred from homology"/>
<accession>Q2YNC7</accession>
<organism>
    <name type="scientific">Brucella abortus (strain 2308)</name>
    <dbReference type="NCBI Taxonomy" id="359391"/>
    <lineage>
        <taxon>Bacteria</taxon>
        <taxon>Pseudomonadati</taxon>
        <taxon>Pseudomonadota</taxon>
        <taxon>Alphaproteobacteria</taxon>
        <taxon>Hyphomicrobiales</taxon>
        <taxon>Brucellaceae</taxon>
        <taxon>Brucella/Ochrobactrum group</taxon>
        <taxon>Brucella</taxon>
    </lineage>
</organism>
<keyword id="KW-0997">Cell inner membrane</keyword>
<keyword id="KW-1003">Cell membrane</keyword>
<keyword id="KW-0472">Membrane</keyword>
<keyword id="KW-0520">NAD</keyword>
<keyword id="KW-0874">Quinone</keyword>
<keyword id="KW-1185">Reference proteome</keyword>
<keyword id="KW-1278">Translocase</keyword>
<keyword id="KW-0813">Transport</keyword>
<keyword id="KW-0830">Ubiquinone</keyword>
<reference key="1">
    <citation type="journal article" date="2005" name="Infect. Immun.">
        <title>Whole-genome analyses of speciation events in pathogenic Brucellae.</title>
        <authorList>
            <person name="Chain P.S."/>
            <person name="Comerci D.J."/>
            <person name="Tolmasky M.E."/>
            <person name="Larimer F.W."/>
            <person name="Malfatti S.A."/>
            <person name="Vergez L.M."/>
            <person name="Aguero F."/>
            <person name="Land M.L."/>
            <person name="Ugalde R.A."/>
            <person name="Garcia E."/>
        </authorList>
    </citation>
    <scope>NUCLEOTIDE SEQUENCE [LARGE SCALE GENOMIC DNA]</scope>
    <source>
        <strain>2308</strain>
    </source>
</reference>
<evidence type="ECO:0000255" key="1">
    <source>
        <dbReference type="HAMAP-Rule" id="MF_01357"/>
    </source>
</evidence>
<dbReference type="EC" id="7.1.1.-" evidence="1"/>
<dbReference type="EMBL" id="AM040264">
    <property type="protein sequence ID" value="CAJ10780.1"/>
    <property type="molecule type" value="Genomic_DNA"/>
</dbReference>
<dbReference type="RefSeq" id="WP_002963939.1">
    <property type="nucleotide sequence ID" value="NZ_KN046823.1"/>
</dbReference>
<dbReference type="SMR" id="Q2YNC7"/>
<dbReference type="STRING" id="359391.BAB1_0824"/>
<dbReference type="KEGG" id="bmf:BAB1_0824"/>
<dbReference type="PATRIC" id="fig|359391.11.peg.3134"/>
<dbReference type="HOGENOM" id="CLU_042628_2_1_5"/>
<dbReference type="PhylomeDB" id="Q2YNC7"/>
<dbReference type="Proteomes" id="UP000002719">
    <property type="component" value="Chromosome I"/>
</dbReference>
<dbReference type="GO" id="GO:0005886">
    <property type="term" value="C:plasma membrane"/>
    <property type="evidence" value="ECO:0007669"/>
    <property type="project" value="UniProtKB-SubCell"/>
</dbReference>
<dbReference type="GO" id="GO:0008137">
    <property type="term" value="F:NADH dehydrogenase (ubiquinone) activity"/>
    <property type="evidence" value="ECO:0007669"/>
    <property type="project" value="InterPro"/>
</dbReference>
<dbReference type="GO" id="GO:0050136">
    <property type="term" value="F:NADH:ubiquinone reductase (non-electrogenic) activity"/>
    <property type="evidence" value="ECO:0007669"/>
    <property type="project" value="UniProtKB-UniRule"/>
</dbReference>
<dbReference type="GO" id="GO:0048038">
    <property type="term" value="F:quinone binding"/>
    <property type="evidence" value="ECO:0007669"/>
    <property type="project" value="UniProtKB-KW"/>
</dbReference>
<dbReference type="Gene3D" id="3.30.460.80">
    <property type="entry name" value="NADH:ubiquinone oxidoreductase, 30kDa subunit"/>
    <property type="match status" value="1"/>
</dbReference>
<dbReference type="HAMAP" id="MF_01357">
    <property type="entry name" value="NDH1_NuoC"/>
    <property type="match status" value="1"/>
</dbReference>
<dbReference type="InterPro" id="IPR010218">
    <property type="entry name" value="NADH_DH_suC"/>
</dbReference>
<dbReference type="InterPro" id="IPR037232">
    <property type="entry name" value="NADH_quin_OxRdtase_su_C/D-like"/>
</dbReference>
<dbReference type="InterPro" id="IPR001268">
    <property type="entry name" value="NADH_UbQ_OxRdtase_30kDa_su"/>
</dbReference>
<dbReference type="InterPro" id="IPR020396">
    <property type="entry name" value="NADH_UbQ_OxRdtase_CS"/>
</dbReference>
<dbReference type="NCBIfam" id="TIGR01961">
    <property type="entry name" value="NuoC_fam"/>
    <property type="match status" value="1"/>
</dbReference>
<dbReference type="NCBIfam" id="NF004730">
    <property type="entry name" value="PRK06074.1-1"/>
    <property type="match status" value="1"/>
</dbReference>
<dbReference type="NCBIfam" id="NF004733">
    <property type="entry name" value="PRK06074.1-5"/>
    <property type="match status" value="1"/>
</dbReference>
<dbReference type="PANTHER" id="PTHR10884:SF14">
    <property type="entry name" value="NADH DEHYDROGENASE [UBIQUINONE] IRON-SULFUR PROTEIN 3, MITOCHONDRIAL"/>
    <property type="match status" value="1"/>
</dbReference>
<dbReference type="PANTHER" id="PTHR10884">
    <property type="entry name" value="NADH DEHYDROGENASE UBIQUINONE IRON-SULFUR PROTEIN 3"/>
    <property type="match status" value="1"/>
</dbReference>
<dbReference type="Pfam" id="PF00329">
    <property type="entry name" value="Complex1_30kDa"/>
    <property type="match status" value="1"/>
</dbReference>
<dbReference type="SUPFAM" id="SSF143243">
    <property type="entry name" value="Nqo5-like"/>
    <property type="match status" value="1"/>
</dbReference>
<dbReference type="PROSITE" id="PS00542">
    <property type="entry name" value="COMPLEX1_30K"/>
    <property type="match status" value="1"/>
</dbReference>
<comment type="function">
    <text evidence="1">NDH-1 shuttles electrons from NADH, via FMN and iron-sulfur (Fe-S) centers, to quinones in the respiratory chain. The immediate electron acceptor for the enzyme in this species is believed to be ubiquinone. Couples the redox reaction to proton translocation (for every two electrons transferred, four hydrogen ions are translocated across the cytoplasmic membrane), and thus conserves the redox energy in a proton gradient.</text>
</comment>
<comment type="catalytic activity">
    <reaction evidence="1">
        <text>a quinone + NADH + 5 H(+)(in) = a quinol + NAD(+) + 4 H(+)(out)</text>
        <dbReference type="Rhea" id="RHEA:57888"/>
        <dbReference type="ChEBI" id="CHEBI:15378"/>
        <dbReference type="ChEBI" id="CHEBI:24646"/>
        <dbReference type="ChEBI" id="CHEBI:57540"/>
        <dbReference type="ChEBI" id="CHEBI:57945"/>
        <dbReference type="ChEBI" id="CHEBI:132124"/>
    </reaction>
</comment>
<comment type="subunit">
    <text evidence="1">NDH-1 is composed of 14 different subunits. Subunits NuoB, C, D, E, F, and G constitute the peripheral sector of the complex.</text>
</comment>
<comment type="subcellular location">
    <subcellularLocation>
        <location evidence="1">Cell inner membrane</location>
        <topology evidence="1">Peripheral membrane protein</topology>
        <orientation evidence="1">Cytoplasmic side</orientation>
    </subcellularLocation>
</comment>
<comment type="similarity">
    <text evidence="1">Belongs to the complex I 30 kDa subunit family.</text>
</comment>
<sequence length="202" mass="23309">MSEEALGELSGYIRERLGDAIEEANLAYGELTLCVPVASLIGVLTLLRDDVQCQFVNLTDISGVDYPQREKRFDVVYQLLSPRQNQRIRVKVQADEDTLVPSAVPVFFGAEWYEREAYDMYGILFSGHPDLRRILTDYGFEGHPLRKDFPLTGFVEVRYNDELKRVVYEPVQLRQEFRNFDFLSPWEGTDYVLPGDEKAKTN</sequence>
<name>NUOC_BRUA2</name>
<feature type="chain" id="PRO_0000358051" description="NADH-quinone oxidoreductase subunit C">
    <location>
        <begin position="1"/>
        <end position="202"/>
    </location>
</feature>
<gene>
    <name evidence="1" type="primary">nuoC</name>
    <name type="ordered locus">BAB1_0824</name>
</gene>